<gene>
    <name type="primary">glcF</name>
    <name type="synonym">ysfD</name>
    <name type="ordered locus">BSU28690</name>
</gene>
<name>GLCF_BACSU</name>
<reference key="1">
    <citation type="journal article" date="1996" name="Microbiology">
        <title>The dnaB-pheA (256 degrees-240 degrees) region of the Bacillus subtilis chromosome containing genes responsible for stress responses, the utilization of plant cell walls and primary metabolism.</title>
        <authorList>
            <person name="Wipat A."/>
            <person name="Carter N."/>
            <person name="Brignell C.S."/>
            <person name="Guy J.B."/>
            <person name="Piper K."/>
            <person name="Sanders J."/>
            <person name="Emmerson P.T."/>
            <person name="Harwood C.R."/>
        </authorList>
    </citation>
    <scope>NUCLEOTIDE SEQUENCE [GENOMIC DNA]</scope>
    <source>
        <strain>168</strain>
    </source>
</reference>
<reference key="2">
    <citation type="journal article" date="1997" name="Nature">
        <title>The complete genome sequence of the Gram-positive bacterium Bacillus subtilis.</title>
        <authorList>
            <person name="Kunst F."/>
            <person name="Ogasawara N."/>
            <person name="Moszer I."/>
            <person name="Albertini A.M."/>
            <person name="Alloni G."/>
            <person name="Azevedo V."/>
            <person name="Bertero M.G."/>
            <person name="Bessieres P."/>
            <person name="Bolotin A."/>
            <person name="Borchert S."/>
            <person name="Borriss R."/>
            <person name="Boursier L."/>
            <person name="Brans A."/>
            <person name="Braun M."/>
            <person name="Brignell S.C."/>
            <person name="Bron S."/>
            <person name="Brouillet S."/>
            <person name="Bruschi C.V."/>
            <person name="Caldwell B."/>
            <person name="Capuano V."/>
            <person name="Carter N.M."/>
            <person name="Choi S.-K."/>
            <person name="Codani J.-J."/>
            <person name="Connerton I.F."/>
            <person name="Cummings N.J."/>
            <person name="Daniel R.A."/>
            <person name="Denizot F."/>
            <person name="Devine K.M."/>
            <person name="Duesterhoeft A."/>
            <person name="Ehrlich S.D."/>
            <person name="Emmerson P.T."/>
            <person name="Entian K.-D."/>
            <person name="Errington J."/>
            <person name="Fabret C."/>
            <person name="Ferrari E."/>
            <person name="Foulger D."/>
            <person name="Fritz C."/>
            <person name="Fujita M."/>
            <person name="Fujita Y."/>
            <person name="Fuma S."/>
            <person name="Galizzi A."/>
            <person name="Galleron N."/>
            <person name="Ghim S.-Y."/>
            <person name="Glaser P."/>
            <person name="Goffeau A."/>
            <person name="Golightly E.J."/>
            <person name="Grandi G."/>
            <person name="Guiseppi G."/>
            <person name="Guy B.J."/>
            <person name="Haga K."/>
            <person name="Haiech J."/>
            <person name="Harwood C.R."/>
            <person name="Henaut A."/>
            <person name="Hilbert H."/>
            <person name="Holsappel S."/>
            <person name="Hosono S."/>
            <person name="Hullo M.-F."/>
            <person name="Itaya M."/>
            <person name="Jones L.-M."/>
            <person name="Joris B."/>
            <person name="Karamata D."/>
            <person name="Kasahara Y."/>
            <person name="Klaerr-Blanchard M."/>
            <person name="Klein C."/>
            <person name="Kobayashi Y."/>
            <person name="Koetter P."/>
            <person name="Koningstein G."/>
            <person name="Krogh S."/>
            <person name="Kumano M."/>
            <person name="Kurita K."/>
            <person name="Lapidus A."/>
            <person name="Lardinois S."/>
            <person name="Lauber J."/>
            <person name="Lazarevic V."/>
            <person name="Lee S.-M."/>
            <person name="Levine A."/>
            <person name="Liu H."/>
            <person name="Masuda S."/>
            <person name="Mauel C."/>
            <person name="Medigue C."/>
            <person name="Medina N."/>
            <person name="Mellado R.P."/>
            <person name="Mizuno M."/>
            <person name="Moestl D."/>
            <person name="Nakai S."/>
            <person name="Noback M."/>
            <person name="Noone D."/>
            <person name="O'Reilly M."/>
            <person name="Ogawa K."/>
            <person name="Ogiwara A."/>
            <person name="Oudega B."/>
            <person name="Park S.-H."/>
            <person name="Parro V."/>
            <person name="Pohl T.M."/>
            <person name="Portetelle D."/>
            <person name="Porwollik S."/>
            <person name="Prescott A.M."/>
            <person name="Presecan E."/>
            <person name="Pujic P."/>
            <person name="Purnelle B."/>
            <person name="Rapoport G."/>
            <person name="Rey M."/>
            <person name="Reynolds S."/>
            <person name="Rieger M."/>
            <person name="Rivolta C."/>
            <person name="Rocha E."/>
            <person name="Roche B."/>
            <person name="Rose M."/>
            <person name="Sadaie Y."/>
            <person name="Sato T."/>
            <person name="Scanlan E."/>
            <person name="Schleich S."/>
            <person name="Schroeter R."/>
            <person name="Scoffone F."/>
            <person name="Sekiguchi J."/>
            <person name="Sekowska A."/>
            <person name="Seror S.J."/>
            <person name="Serror P."/>
            <person name="Shin B.-S."/>
            <person name="Soldo B."/>
            <person name="Sorokin A."/>
            <person name="Tacconi E."/>
            <person name="Takagi T."/>
            <person name="Takahashi H."/>
            <person name="Takemaru K."/>
            <person name="Takeuchi M."/>
            <person name="Tamakoshi A."/>
            <person name="Tanaka T."/>
            <person name="Terpstra P."/>
            <person name="Tognoni A."/>
            <person name="Tosato V."/>
            <person name="Uchiyama S."/>
            <person name="Vandenbol M."/>
            <person name="Vannier F."/>
            <person name="Vassarotti A."/>
            <person name="Viari A."/>
            <person name="Wambutt R."/>
            <person name="Wedler E."/>
            <person name="Wedler H."/>
            <person name="Weitzenegger T."/>
            <person name="Winters P."/>
            <person name="Wipat A."/>
            <person name="Yamamoto H."/>
            <person name="Yamane K."/>
            <person name="Yasumoto K."/>
            <person name="Yata K."/>
            <person name="Yoshida K."/>
            <person name="Yoshikawa H.-F."/>
            <person name="Zumstein E."/>
            <person name="Yoshikawa H."/>
            <person name="Danchin A."/>
        </authorList>
    </citation>
    <scope>NUCLEOTIDE SEQUENCE [LARGE SCALE GENOMIC DNA]</scope>
    <source>
        <strain>168</strain>
    </source>
</reference>
<feature type="chain" id="PRO_0000359979" description="Probable glycolate oxidase iron-sulfur subunit">
    <location>
        <begin position="1"/>
        <end position="444"/>
    </location>
</feature>
<feature type="domain" description="4Fe-4S ferredoxin-type 1" evidence="2">
    <location>
        <begin position="14"/>
        <end position="46"/>
    </location>
</feature>
<feature type="domain" description="4Fe-4S ferredoxin-type 2" evidence="2">
    <location>
        <begin position="69"/>
        <end position="100"/>
    </location>
</feature>
<feature type="binding site" evidence="2">
    <location>
        <position position="26"/>
    </location>
    <ligand>
        <name>[4Fe-4S] cluster</name>
        <dbReference type="ChEBI" id="CHEBI:49883"/>
        <label>1</label>
    </ligand>
</feature>
<feature type="binding site" evidence="2">
    <location>
        <position position="29"/>
    </location>
    <ligand>
        <name>[4Fe-4S] cluster</name>
        <dbReference type="ChEBI" id="CHEBI:49883"/>
        <label>1</label>
    </ligand>
</feature>
<feature type="binding site" evidence="2">
    <location>
        <position position="32"/>
    </location>
    <ligand>
        <name>[4Fe-4S] cluster</name>
        <dbReference type="ChEBI" id="CHEBI:49883"/>
        <label>1</label>
    </ligand>
</feature>
<feature type="binding site" evidence="2">
    <location>
        <position position="36"/>
    </location>
    <ligand>
        <name>[4Fe-4S] cluster</name>
        <dbReference type="ChEBI" id="CHEBI:49883"/>
        <label>2</label>
    </ligand>
</feature>
<feature type="binding site" evidence="2">
    <location>
        <position position="78"/>
    </location>
    <ligand>
        <name>[4Fe-4S] cluster</name>
        <dbReference type="ChEBI" id="CHEBI:49883"/>
        <label>2</label>
    </ligand>
</feature>
<feature type="binding site" evidence="2">
    <location>
        <position position="81"/>
    </location>
    <ligand>
        <name>[4Fe-4S] cluster</name>
        <dbReference type="ChEBI" id="CHEBI:49883"/>
        <label>2</label>
    </ligand>
</feature>
<feature type="binding site" evidence="2">
    <location>
        <position position="84"/>
    </location>
    <ligand>
        <name>[4Fe-4S] cluster</name>
        <dbReference type="ChEBI" id="CHEBI:49883"/>
        <label>2</label>
    </ligand>
</feature>
<feature type="binding site" evidence="2">
    <location>
        <position position="88"/>
    </location>
    <ligand>
        <name>[4Fe-4S] cluster</name>
        <dbReference type="ChEBI" id="CHEBI:49883"/>
        <label>1</label>
    </ligand>
</feature>
<protein>
    <recommendedName>
        <fullName>Probable glycolate oxidase iron-sulfur subunit</fullName>
        <ecNumber evidence="1">1.1.99.14</ecNumber>
    </recommendedName>
    <alternativeName>
        <fullName>Glycolate dehydrogenase subunit GlcF</fullName>
    </alternativeName>
</protein>
<sequence length="444" mass="49205">MTTEKEMKQIQNEFKERMDEGELLNCMRCGFCLPSCPTYIESGFQETHSPRGRIALMKAVADGMIEPDEDVERSLSLCLGCRACEPVCPSGVKYGQLLEEARDIIHQNKKHSLGERVMRKTAFHELFPHQNRMRSAVSLIGLYQRSGLQTAVRKSGMLRVLPEHLRTMEAVLPDVPKSKDMKHRPRFLPSIGPMKKRVAFFSGCLMDTMFLPTNNATLKLLQLAGCDIVIPPEQACCGALHGHSGEKNTGKELAKQNIAAFEALDVDAVITNAGGCGAFLTEYDHLLKDDPEWSERAAAFVQKLKDFSSVLVELDFHQMDLALETPQVVTYQDSCHLRNVMHTSLEPRQLLKSIKGAEFKEMEKADSCCGSAGIYNIVEVEMSMKILDSKMAAVKATEAILIVTANPGCLLQMKLGIEREGLSGKVRAVHLADLLLEAAGHKTS</sequence>
<accession>P94534</accession>
<accession>Q795W9</accession>
<organism>
    <name type="scientific">Bacillus subtilis (strain 168)</name>
    <dbReference type="NCBI Taxonomy" id="224308"/>
    <lineage>
        <taxon>Bacteria</taxon>
        <taxon>Bacillati</taxon>
        <taxon>Bacillota</taxon>
        <taxon>Bacilli</taxon>
        <taxon>Bacillales</taxon>
        <taxon>Bacillaceae</taxon>
        <taxon>Bacillus</taxon>
    </lineage>
</organism>
<keyword id="KW-0004">4Fe-4S</keyword>
<keyword id="KW-1003">Cell membrane</keyword>
<keyword id="KW-0249">Electron transport</keyword>
<keyword id="KW-0408">Iron</keyword>
<keyword id="KW-0411">Iron-sulfur</keyword>
<keyword id="KW-0472">Membrane</keyword>
<keyword id="KW-0479">Metal-binding</keyword>
<keyword id="KW-0560">Oxidoreductase</keyword>
<keyword id="KW-1185">Reference proteome</keyword>
<keyword id="KW-0677">Repeat</keyword>
<keyword id="KW-0813">Transport</keyword>
<comment type="function">
    <text evidence="1">Component of a complex that catalyzes the oxidation of glycolate to glyoxylate. Is also able to oxidize D-lactate ((R)-lactate). Does not link directly to O(2), and 2,6-dichloroindophenol (DCIP) and phenazine methosulfate (PMS) can act as artificial electron acceptors in vitro, but the physiological molecule that functions as primary electron acceptor during glycolate oxidation is unknown.</text>
</comment>
<comment type="catalytic activity">
    <reaction evidence="1">
        <text>glycolate + A = glyoxylate + AH2</text>
        <dbReference type="Rhea" id="RHEA:21264"/>
        <dbReference type="ChEBI" id="CHEBI:13193"/>
        <dbReference type="ChEBI" id="CHEBI:17499"/>
        <dbReference type="ChEBI" id="CHEBI:29805"/>
        <dbReference type="ChEBI" id="CHEBI:36655"/>
        <dbReference type="EC" id="1.1.99.14"/>
    </reaction>
</comment>
<comment type="catalytic activity">
    <reaction evidence="1">
        <text>(R)-lactate + A = pyruvate + AH2</text>
        <dbReference type="Rhea" id="RHEA:15089"/>
        <dbReference type="ChEBI" id="CHEBI:13193"/>
        <dbReference type="ChEBI" id="CHEBI:15361"/>
        <dbReference type="ChEBI" id="CHEBI:16004"/>
        <dbReference type="ChEBI" id="CHEBI:17499"/>
    </reaction>
</comment>
<comment type="cofactor">
    <cofactor evidence="2">
        <name>[4Fe-4S] cluster</name>
        <dbReference type="ChEBI" id="CHEBI:49883"/>
    </cofactor>
    <text evidence="2">Binds 2 [4Fe-4S] clusters.</text>
</comment>
<comment type="subunit">
    <text evidence="3">The glycolate oxidase likely consists of several subunits including GlcD and GlcF.</text>
</comment>
<comment type="subcellular location">
    <subcellularLocation>
        <location evidence="1">Cell membrane</location>
    </subcellularLocation>
</comment>
<evidence type="ECO:0000250" key="1">
    <source>
        <dbReference type="UniProtKB" id="P52074"/>
    </source>
</evidence>
<evidence type="ECO:0000255" key="2">
    <source>
        <dbReference type="PROSITE-ProRule" id="PRU00711"/>
    </source>
</evidence>
<evidence type="ECO:0000305" key="3"/>
<dbReference type="EC" id="1.1.99.14" evidence="1"/>
<dbReference type="EMBL" id="Z75208">
    <property type="protein sequence ID" value="CAA99598.1"/>
    <property type="molecule type" value="Genomic_DNA"/>
</dbReference>
<dbReference type="EMBL" id="AL009126">
    <property type="protein sequence ID" value="CAB14829.1"/>
    <property type="molecule type" value="Genomic_DNA"/>
</dbReference>
<dbReference type="PIR" id="E69984">
    <property type="entry name" value="E69984"/>
</dbReference>
<dbReference type="RefSeq" id="NP_390747.1">
    <property type="nucleotide sequence ID" value="NC_000964.3"/>
</dbReference>
<dbReference type="RefSeq" id="WP_003229519.1">
    <property type="nucleotide sequence ID" value="NZ_OZ025638.1"/>
</dbReference>
<dbReference type="SMR" id="P94534"/>
<dbReference type="FunCoup" id="P94534">
    <property type="interactions" value="91"/>
</dbReference>
<dbReference type="STRING" id="224308.BSU28690"/>
<dbReference type="PaxDb" id="224308-BSU28690"/>
<dbReference type="DNASU" id="937435"/>
<dbReference type="EnsemblBacteria" id="CAB14829">
    <property type="protein sequence ID" value="CAB14829"/>
    <property type="gene ID" value="BSU_28690"/>
</dbReference>
<dbReference type="GeneID" id="937435"/>
<dbReference type="KEGG" id="bsu:BSU28690"/>
<dbReference type="PATRIC" id="fig|224308.179.peg.3117"/>
<dbReference type="eggNOG" id="COG0247">
    <property type="taxonomic scope" value="Bacteria"/>
</dbReference>
<dbReference type="InParanoid" id="P94534"/>
<dbReference type="OrthoDB" id="9770306at2"/>
<dbReference type="PhylomeDB" id="P94534"/>
<dbReference type="BioCyc" id="BSUB:BSU28690-MONOMER"/>
<dbReference type="Proteomes" id="UP000001570">
    <property type="component" value="Chromosome"/>
</dbReference>
<dbReference type="GO" id="GO:0005886">
    <property type="term" value="C:plasma membrane"/>
    <property type="evidence" value="ECO:0000318"/>
    <property type="project" value="GO_Central"/>
</dbReference>
<dbReference type="GO" id="GO:0051539">
    <property type="term" value="F:4 iron, 4 sulfur cluster binding"/>
    <property type="evidence" value="ECO:0007669"/>
    <property type="project" value="UniProtKB-KW"/>
</dbReference>
<dbReference type="GO" id="GO:0047809">
    <property type="term" value="F:D-2-hydroxy-acid dehydrogenase activity"/>
    <property type="evidence" value="ECO:0007669"/>
    <property type="project" value="RHEA"/>
</dbReference>
<dbReference type="GO" id="GO:0019154">
    <property type="term" value="F:glycolate dehydrogenase activity"/>
    <property type="evidence" value="ECO:0000318"/>
    <property type="project" value="GO_Central"/>
</dbReference>
<dbReference type="GO" id="GO:0046872">
    <property type="term" value="F:metal ion binding"/>
    <property type="evidence" value="ECO:0007669"/>
    <property type="project" value="UniProtKB-KW"/>
</dbReference>
<dbReference type="GO" id="GO:0046296">
    <property type="term" value="P:glycolate catabolic process"/>
    <property type="evidence" value="ECO:0000318"/>
    <property type="project" value="GO_Central"/>
</dbReference>
<dbReference type="Gene3D" id="1.10.1060.10">
    <property type="entry name" value="Alpha-helical ferredoxin"/>
    <property type="match status" value="1"/>
</dbReference>
<dbReference type="InterPro" id="IPR017896">
    <property type="entry name" value="4Fe4S_Fe-S-bd"/>
</dbReference>
<dbReference type="InterPro" id="IPR017900">
    <property type="entry name" value="4Fe4S_Fe_S_CS"/>
</dbReference>
<dbReference type="InterPro" id="IPR004017">
    <property type="entry name" value="Cys_rich_dom"/>
</dbReference>
<dbReference type="InterPro" id="IPR012257">
    <property type="entry name" value="Glc_ox_4Fe-4S"/>
</dbReference>
<dbReference type="InterPro" id="IPR009051">
    <property type="entry name" value="Helical_ferredxn"/>
</dbReference>
<dbReference type="PANTHER" id="PTHR32479">
    <property type="entry name" value="GLYCOLATE OXIDASE IRON-SULFUR SUBUNIT"/>
    <property type="match status" value="1"/>
</dbReference>
<dbReference type="PANTHER" id="PTHR32479:SF17">
    <property type="entry name" value="GLYCOLATE OXIDASE IRON-SULFUR SUBUNIT"/>
    <property type="match status" value="1"/>
</dbReference>
<dbReference type="Pfam" id="PF02754">
    <property type="entry name" value="CCG"/>
    <property type="match status" value="2"/>
</dbReference>
<dbReference type="Pfam" id="PF13183">
    <property type="entry name" value="Fer4_8"/>
    <property type="match status" value="1"/>
</dbReference>
<dbReference type="PIRSF" id="PIRSF000139">
    <property type="entry name" value="Glc_ox_4Fe-4S"/>
    <property type="match status" value="1"/>
</dbReference>
<dbReference type="SUPFAM" id="SSF46548">
    <property type="entry name" value="alpha-helical ferredoxin"/>
    <property type="match status" value="1"/>
</dbReference>
<dbReference type="PROSITE" id="PS00198">
    <property type="entry name" value="4FE4S_FER_1"/>
    <property type="match status" value="2"/>
</dbReference>
<dbReference type="PROSITE" id="PS51379">
    <property type="entry name" value="4FE4S_FER_2"/>
    <property type="match status" value="2"/>
</dbReference>
<proteinExistence type="inferred from homology"/>